<dbReference type="EMBL" id="AB164644">
    <property type="protein sequence ID" value="BAE44204.1"/>
    <property type="molecule type" value="mRNA"/>
</dbReference>
<dbReference type="EMBL" id="AL663010">
    <property type="protein sequence ID" value="CAE05719.2"/>
    <property type="molecule type" value="Genomic_DNA"/>
</dbReference>
<dbReference type="EMBL" id="AP008210">
    <property type="protein sequence ID" value="BAF15264.1"/>
    <property type="status" value="ALT_SEQ"/>
    <property type="molecule type" value="Genomic_DNA"/>
</dbReference>
<dbReference type="EMBL" id="AP014960">
    <property type="status" value="NOT_ANNOTATED_CDS"/>
    <property type="molecule type" value="Genomic_DNA"/>
</dbReference>
<dbReference type="EMBL" id="CM000141">
    <property type="protein sequence ID" value="EAZ31384.1"/>
    <property type="status" value="ALT_FRAME"/>
    <property type="molecule type" value="Genomic_DNA"/>
</dbReference>
<dbReference type="RefSeq" id="XP_015636359.1">
    <property type="nucleotide sequence ID" value="XM_015780873.1"/>
</dbReference>
<dbReference type="SMR" id="Q7XKF4"/>
<dbReference type="FunCoup" id="Q7XKF4">
    <property type="interactions" value="127"/>
</dbReference>
<dbReference type="STRING" id="39947.Q7XKF4"/>
<dbReference type="PaxDb" id="39947-Q7XKF4"/>
<dbReference type="KEGG" id="dosa:Os04g0524500"/>
<dbReference type="eggNOG" id="ENOG502QQ2H">
    <property type="taxonomic scope" value="Eukaryota"/>
</dbReference>
<dbReference type="HOGENOM" id="CLU_015477_2_0_1"/>
<dbReference type="InParanoid" id="Q7XKF4"/>
<dbReference type="OrthoDB" id="627262at2759"/>
<dbReference type="Proteomes" id="UP000000763">
    <property type="component" value="Chromosome 4"/>
</dbReference>
<dbReference type="Proteomes" id="UP000007752">
    <property type="component" value="Chromosome 4"/>
</dbReference>
<dbReference type="Proteomes" id="UP000059680">
    <property type="component" value="Chromosome 4"/>
</dbReference>
<dbReference type="GO" id="GO:0016020">
    <property type="term" value="C:membrane"/>
    <property type="evidence" value="ECO:0000318"/>
    <property type="project" value="GO_Central"/>
</dbReference>
<dbReference type="GO" id="GO:0035673">
    <property type="term" value="F:oligopeptide transmembrane transporter activity"/>
    <property type="evidence" value="ECO:0007669"/>
    <property type="project" value="InterPro"/>
</dbReference>
<dbReference type="InterPro" id="IPR004813">
    <property type="entry name" value="OPT"/>
</dbReference>
<dbReference type="InterPro" id="IPR045035">
    <property type="entry name" value="YSL-like"/>
</dbReference>
<dbReference type="NCBIfam" id="TIGR00728">
    <property type="entry name" value="OPT_sfam"/>
    <property type="match status" value="1"/>
</dbReference>
<dbReference type="PANTHER" id="PTHR31645:SF6">
    <property type="entry name" value="METAL-NICOTIANAMINE TRANSPORTER YSL13-RELATED"/>
    <property type="match status" value="1"/>
</dbReference>
<dbReference type="PANTHER" id="PTHR31645">
    <property type="entry name" value="OLIGOPEPTIDE TRANSPORTER YGL114W-RELATED"/>
    <property type="match status" value="1"/>
</dbReference>
<dbReference type="Pfam" id="PF03169">
    <property type="entry name" value="OPT"/>
    <property type="match status" value="1"/>
</dbReference>
<evidence type="ECO:0000250" key="1"/>
<evidence type="ECO:0000255" key="2"/>
<evidence type="ECO:0000256" key="3">
    <source>
        <dbReference type="SAM" id="MobiDB-lite"/>
    </source>
</evidence>
<evidence type="ECO:0000269" key="4">
    <source>
    </source>
</evidence>
<evidence type="ECO:0000269" key="5">
    <source>
    </source>
</evidence>
<evidence type="ECO:0000305" key="6"/>
<protein>
    <recommendedName>
        <fullName>Probable metal-nicotianamine transporter YSL13</fullName>
    </recommendedName>
    <alternativeName>
        <fullName>Protein YELLOW STRIPE LIKE 13</fullName>
        <shortName>OsYSL13</shortName>
    </alternativeName>
</protein>
<keyword id="KW-0025">Alternative splicing</keyword>
<keyword id="KW-0472">Membrane</keyword>
<keyword id="KW-1185">Reference proteome</keyword>
<keyword id="KW-0812">Transmembrane</keyword>
<keyword id="KW-1133">Transmembrane helix</keyword>
<keyword id="KW-0813">Transport</keyword>
<name>YSL13_ORYSJ</name>
<feature type="chain" id="PRO_0000363876" description="Probable metal-nicotianamine transporter YSL13">
    <location>
        <begin position="1"/>
        <end position="724"/>
    </location>
</feature>
<feature type="transmembrane region" description="Helical" evidence="2">
    <location>
        <begin position="80"/>
        <end position="100"/>
    </location>
</feature>
<feature type="transmembrane region" description="Helical" evidence="2">
    <location>
        <begin position="103"/>
        <end position="123"/>
    </location>
</feature>
<feature type="transmembrane region" description="Helical" evidence="2">
    <location>
        <begin position="148"/>
        <end position="168"/>
    </location>
</feature>
<feature type="transmembrane region" description="Helical" evidence="2">
    <location>
        <begin position="190"/>
        <end position="210"/>
    </location>
</feature>
<feature type="transmembrane region" description="Helical" evidence="2">
    <location>
        <begin position="252"/>
        <end position="272"/>
    </location>
</feature>
<feature type="transmembrane region" description="Helical" evidence="2">
    <location>
        <begin position="310"/>
        <end position="330"/>
    </location>
</feature>
<feature type="transmembrane region" description="Helical" evidence="2">
    <location>
        <begin position="355"/>
        <end position="375"/>
    </location>
</feature>
<feature type="transmembrane region" description="Helical" evidence="2">
    <location>
        <begin position="423"/>
        <end position="443"/>
    </location>
</feature>
<feature type="transmembrane region" description="Helical" evidence="2">
    <location>
        <begin position="455"/>
        <end position="475"/>
    </location>
</feature>
<feature type="transmembrane region" description="Helical" evidence="2">
    <location>
        <begin position="487"/>
        <end position="507"/>
    </location>
</feature>
<feature type="transmembrane region" description="Helical" evidence="2">
    <location>
        <begin position="541"/>
        <end position="561"/>
    </location>
</feature>
<feature type="transmembrane region" description="Helical" evidence="2">
    <location>
        <begin position="603"/>
        <end position="623"/>
    </location>
</feature>
<feature type="transmembrane region" description="Helical" evidence="2">
    <location>
        <begin position="640"/>
        <end position="660"/>
    </location>
</feature>
<feature type="transmembrane region" description="Helical" evidence="2">
    <location>
        <begin position="675"/>
        <end position="695"/>
    </location>
</feature>
<feature type="region of interest" description="Disordered" evidence="3">
    <location>
        <begin position="1"/>
        <end position="54"/>
    </location>
</feature>
<feature type="splice variant" id="VSP_036330" description="In isoform 2." evidence="6">
    <location>
        <begin position="26"/>
        <end position="61"/>
    </location>
</feature>
<feature type="sequence conflict" description="In Ref. 6; EAZ31384." evidence="6" ref="6">
    <original>EE</original>
    <variation>NK</variation>
    <location>
        <begin position="53"/>
        <end position="54"/>
    </location>
</feature>
<gene>
    <name type="primary">YSL13</name>
    <name type="ordered locus">Os04g0524500</name>
    <name type="ordered locus">LOC_Os04g44300</name>
    <name type="ORF">OsJ_014867</name>
    <name type="ORF">OSJNBb0065J09.15</name>
</gene>
<accession>Q7XKF4</accession>
<accession>A3AVP5</accession>
<accession>Q0JBM3</accession>
<accession>Q3V7B8</accession>
<organism>
    <name type="scientific">Oryza sativa subsp. japonica</name>
    <name type="common">Rice</name>
    <dbReference type="NCBI Taxonomy" id="39947"/>
    <lineage>
        <taxon>Eukaryota</taxon>
        <taxon>Viridiplantae</taxon>
        <taxon>Streptophyta</taxon>
        <taxon>Embryophyta</taxon>
        <taxon>Tracheophyta</taxon>
        <taxon>Spermatophyta</taxon>
        <taxon>Magnoliopsida</taxon>
        <taxon>Liliopsida</taxon>
        <taxon>Poales</taxon>
        <taxon>Poaceae</taxon>
        <taxon>BOP clade</taxon>
        <taxon>Oryzoideae</taxon>
        <taxon>Oryzeae</taxon>
        <taxon>Oryzinae</taxon>
        <taxon>Oryza</taxon>
        <taxon>Oryza sativa</taxon>
    </lineage>
</organism>
<reference key="1">
    <citation type="journal article" date="2004" name="Plant J.">
        <title>OsYSL2 is a rice metal-nicotianamine transporter that is regulated by iron and expressed in the phloem.</title>
        <authorList>
            <person name="Koike S."/>
            <person name="Inoue H."/>
            <person name="Mizuno D."/>
            <person name="Takahashi M."/>
            <person name="Nakanishi H."/>
            <person name="Mori S."/>
            <person name="Nishizawa N.K."/>
        </authorList>
    </citation>
    <scope>NUCLEOTIDE SEQUENCE [MRNA] (ISOFORM 1)</scope>
    <scope>TISSUE SPECIFICITY</scope>
    <scope>GENE FAMILY</scope>
    <scope>NOMENCLATURE</scope>
    <source>
        <strain>cv. Nipponbare</strain>
    </source>
</reference>
<reference key="2">
    <citation type="journal article" date="2002" name="Nature">
        <title>Sequence and analysis of rice chromosome 4.</title>
        <authorList>
            <person name="Feng Q."/>
            <person name="Zhang Y."/>
            <person name="Hao P."/>
            <person name="Wang S."/>
            <person name="Fu G."/>
            <person name="Huang Y."/>
            <person name="Li Y."/>
            <person name="Zhu J."/>
            <person name="Liu Y."/>
            <person name="Hu X."/>
            <person name="Jia P."/>
            <person name="Zhang Y."/>
            <person name="Zhao Q."/>
            <person name="Ying K."/>
            <person name="Yu S."/>
            <person name="Tang Y."/>
            <person name="Weng Q."/>
            <person name="Zhang L."/>
            <person name="Lu Y."/>
            <person name="Mu J."/>
            <person name="Lu Y."/>
            <person name="Zhang L.S."/>
            <person name="Yu Z."/>
            <person name="Fan D."/>
            <person name="Liu X."/>
            <person name="Lu T."/>
            <person name="Li C."/>
            <person name="Wu Y."/>
            <person name="Sun T."/>
            <person name="Lei H."/>
            <person name="Li T."/>
            <person name="Hu H."/>
            <person name="Guan J."/>
            <person name="Wu M."/>
            <person name="Zhang R."/>
            <person name="Zhou B."/>
            <person name="Chen Z."/>
            <person name="Chen L."/>
            <person name="Jin Z."/>
            <person name="Wang R."/>
            <person name="Yin H."/>
            <person name="Cai Z."/>
            <person name="Ren S."/>
            <person name="Lv G."/>
            <person name="Gu W."/>
            <person name="Zhu G."/>
            <person name="Tu Y."/>
            <person name="Jia J."/>
            <person name="Zhang Y."/>
            <person name="Chen J."/>
            <person name="Kang H."/>
            <person name="Chen X."/>
            <person name="Shao C."/>
            <person name="Sun Y."/>
            <person name="Hu Q."/>
            <person name="Zhang X."/>
            <person name="Zhang W."/>
            <person name="Wang L."/>
            <person name="Ding C."/>
            <person name="Sheng H."/>
            <person name="Gu J."/>
            <person name="Chen S."/>
            <person name="Ni L."/>
            <person name="Zhu F."/>
            <person name="Chen W."/>
            <person name="Lan L."/>
            <person name="Lai Y."/>
            <person name="Cheng Z."/>
            <person name="Gu M."/>
            <person name="Jiang J."/>
            <person name="Li J."/>
            <person name="Hong G."/>
            <person name="Xue Y."/>
            <person name="Han B."/>
        </authorList>
    </citation>
    <scope>NUCLEOTIDE SEQUENCE [LARGE SCALE GENOMIC DNA]</scope>
    <source>
        <strain>cv. Nipponbare</strain>
    </source>
</reference>
<reference key="3">
    <citation type="journal article" date="2005" name="Nature">
        <title>The map-based sequence of the rice genome.</title>
        <authorList>
            <consortium name="International rice genome sequencing project (IRGSP)"/>
        </authorList>
    </citation>
    <scope>NUCLEOTIDE SEQUENCE [LARGE SCALE GENOMIC DNA]</scope>
    <source>
        <strain>cv. Nipponbare</strain>
    </source>
</reference>
<reference key="4">
    <citation type="journal article" date="2008" name="Nucleic Acids Res.">
        <title>The rice annotation project database (RAP-DB): 2008 update.</title>
        <authorList>
            <consortium name="The rice annotation project (RAP)"/>
        </authorList>
    </citation>
    <scope>GENOME REANNOTATION</scope>
    <source>
        <strain>cv. Nipponbare</strain>
    </source>
</reference>
<reference key="5">
    <citation type="journal article" date="2013" name="Rice">
        <title>Improvement of the Oryza sativa Nipponbare reference genome using next generation sequence and optical map data.</title>
        <authorList>
            <person name="Kawahara Y."/>
            <person name="de la Bastide M."/>
            <person name="Hamilton J.P."/>
            <person name="Kanamori H."/>
            <person name="McCombie W.R."/>
            <person name="Ouyang S."/>
            <person name="Schwartz D.C."/>
            <person name="Tanaka T."/>
            <person name="Wu J."/>
            <person name="Zhou S."/>
            <person name="Childs K.L."/>
            <person name="Davidson R.M."/>
            <person name="Lin H."/>
            <person name="Quesada-Ocampo L."/>
            <person name="Vaillancourt B."/>
            <person name="Sakai H."/>
            <person name="Lee S.S."/>
            <person name="Kim J."/>
            <person name="Numa H."/>
            <person name="Itoh T."/>
            <person name="Buell C.R."/>
            <person name="Matsumoto T."/>
        </authorList>
    </citation>
    <scope>GENOME REANNOTATION</scope>
    <source>
        <strain>cv. Nipponbare</strain>
    </source>
</reference>
<reference key="6">
    <citation type="journal article" date="2005" name="PLoS Biol.">
        <title>The genomes of Oryza sativa: a history of duplications.</title>
        <authorList>
            <person name="Yu J."/>
            <person name="Wang J."/>
            <person name="Lin W."/>
            <person name="Li S."/>
            <person name="Li H."/>
            <person name="Zhou J."/>
            <person name="Ni P."/>
            <person name="Dong W."/>
            <person name="Hu S."/>
            <person name="Zeng C."/>
            <person name="Zhang J."/>
            <person name="Zhang Y."/>
            <person name="Li R."/>
            <person name="Xu Z."/>
            <person name="Li S."/>
            <person name="Li X."/>
            <person name="Zheng H."/>
            <person name="Cong L."/>
            <person name="Lin L."/>
            <person name="Yin J."/>
            <person name="Geng J."/>
            <person name="Li G."/>
            <person name="Shi J."/>
            <person name="Liu J."/>
            <person name="Lv H."/>
            <person name="Li J."/>
            <person name="Wang J."/>
            <person name="Deng Y."/>
            <person name="Ran L."/>
            <person name="Shi X."/>
            <person name="Wang X."/>
            <person name="Wu Q."/>
            <person name="Li C."/>
            <person name="Ren X."/>
            <person name="Wang J."/>
            <person name="Wang X."/>
            <person name="Li D."/>
            <person name="Liu D."/>
            <person name="Zhang X."/>
            <person name="Ji Z."/>
            <person name="Zhao W."/>
            <person name="Sun Y."/>
            <person name="Zhang Z."/>
            <person name="Bao J."/>
            <person name="Han Y."/>
            <person name="Dong L."/>
            <person name="Ji J."/>
            <person name="Chen P."/>
            <person name="Wu S."/>
            <person name="Liu J."/>
            <person name="Xiao Y."/>
            <person name="Bu D."/>
            <person name="Tan J."/>
            <person name="Yang L."/>
            <person name="Ye C."/>
            <person name="Zhang J."/>
            <person name="Xu J."/>
            <person name="Zhou Y."/>
            <person name="Yu Y."/>
            <person name="Zhang B."/>
            <person name="Zhuang S."/>
            <person name="Wei H."/>
            <person name="Liu B."/>
            <person name="Lei M."/>
            <person name="Yu H."/>
            <person name="Li Y."/>
            <person name="Xu H."/>
            <person name="Wei S."/>
            <person name="He X."/>
            <person name="Fang L."/>
            <person name="Zhang Z."/>
            <person name="Zhang Y."/>
            <person name="Huang X."/>
            <person name="Su Z."/>
            <person name="Tong W."/>
            <person name="Li J."/>
            <person name="Tong Z."/>
            <person name="Li S."/>
            <person name="Ye J."/>
            <person name="Wang L."/>
            <person name="Fang L."/>
            <person name="Lei T."/>
            <person name="Chen C.-S."/>
            <person name="Chen H.-C."/>
            <person name="Xu Z."/>
            <person name="Li H."/>
            <person name="Huang H."/>
            <person name="Zhang F."/>
            <person name="Xu H."/>
            <person name="Li N."/>
            <person name="Zhao C."/>
            <person name="Li S."/>
            <person name="Dong L."/>
            <person name="Huang Y."/>
            <person name="Li L."/>
            <person name="Xi Y."/>
            <person name="Qi Q."/>
            <person name="Li W."/>
            <person name="Zhang B."/>
            <person name="Hu W."/>
            <person name="Zhang Y."/>
            <person name="Tian X."/>
            <person name="Jiao Y."/>
            <person name="Liang X."/>
            <person name="Jin J."/>
            <person name="Gao L."/>
            <person name="Zheng W."/>
            <person name="Hao B."/>
            <person name="Liu S.-M."/>
            <person name="Wang W."/>
            <person name="Yuan L."/>
            <person name="Cao M."/>
            <person name="McDermott J."/>
            <person name="Samudrala R."/>
            <person name="Wang J."/>
            <person name="Wong G.K.-S."/>
            <person name="Yang H."/>
        </authorList>
    </citation>
    <scope>NUCLEOTIDE SEQUENCE [LARGE SCALE GENOMIC DNA]</scope>
    <source>
        <strain>cv. Nipponbare</strain>
    </source>
</reference>
<reference key="7">
    <citation type="journal article" date="2009" name="J. Biol. Chem.">
        <title>Rice OsYSL15 is an iron-regulated iron(III)-deoxymugineic acid Transporter expressed in the roots and is essential for iron uptake in early growth of the seedlings.</title>
        <authorList>
            <person name="Inoue H."/>
            <person name="Kobayashi T."/>
            <person name="Nozoye T."/>
            <person name="Takahashi M."/>
            <person name="Kakei Y."/>
            <person name="Suzuki K."/>
            <person name="Nakazono M."/>
            <person name="Nakanishi H."/>
            <person name="Mori S."/>
            <person name="Nishizawa N.K."/>
        </authorList>
    </citation>
    <scope>TISSUE SPECIFICITY</scope>
</reference>
<sequence length="724" mass="78767">MATVPTPSEAHGGATPTAADVEMVEASELRRRGKPSGDRATGPSRDGAAAAAEEAAAPSVERVFADRPVPSWREQLTVRAFVVSFFLVIMFSVIVMKLNLTTGIIPSLNVSAGLLGFFFVRLWTAAIERVGLLRQPFTRQENTVIQTCVVAGYDIAFSGGFGNYILSMSERIAGLGTEANNAQNIKNPHLGWIIGFLFLVSFIGLFGLVPLRKVMIIDYKLTYPSGTATAFLINGFHTPHGAKIAAKQVKKLGIFFILSFFWGFFQWFYTATDDCGFHKFPSLGLQAFQHKFFFDFSPTYVGVGMICPHIVNVSVLLGGILSWGIMWPLIAKKRGDWFSADLPDGSLHGMQGYRVFIAIALILGDGLYNFLKMIILTAFSLRSQIKKKNASTLPVSDDGMVTTTAAVSYDEERRNELFVKDQIPWYVAYGGYAVVAAISIGTVPQIIPQLKWYQILVAYIVAPILAFCNAYGTGLTDWSLVTTYGKLAIFAFGAWTGASHGGVLAGLAACGVMMNIVSTAADLMQDFKTGYLTLASPRSMFVSQVIGTAMGCVIAPCVFWLFYKAFDNIGISGSDYPAPNAAVFRSIAILGVDGFSSLPKNCLNLCYAFFAAAIVVNLIRDLVPKVSRFIPIPMAMAIPFYIGSYFAIDMFIGTVILFVWQRVDRAKADTYGPAVASGMICGDGIWVLPQSVLALAKVKPPICMKFLSRRTNDKVDAFLTTLGK</sequence>
<comment type="function">
    <text evidence="1">May be involved in the transport of nicotianamine-chelated metals.</text>
</comment>
<comment type="subcellular location">
    <subcellularLocation>
        <location evidence="6">Membrane</location>
        <topology evidence="6">Multi-pass membrane protein</topology>
    </subcellularLocation>
</comment>
<comment type="alternative products">
    <event type="alternative splicing"/>
    <isoform>
        <id>Q7XKF4-1</id>
        <name>1</name>
        <sequence type="displayed"/>
    </isoform>
    <isoform>
        <id>Q7XKF4-2</id>
        <name>2</name>
        <sequence type="described" ref="VSP_036330"/>
    </isoform>
</comment>
<comment type="tissue specificity">
    <text evidence="4 5">Expressed in leaves and at low levels in root cortex.</text>
</comment>
<comment type="similarity">
    <text evidence="6">Belongs to the YSL (TC 2.A.67.2) family.</text>
</comment>
<comment type="sequence caution" evidence="6">
    <conflict type="erroneous gene model prediction">
        <sequence resource="EMBL-CDS" id="BAF15264"/>
    </conflict>
</comment>
<comment type="sequence caution" evidence="6">
    <conflict type="frameshift">
        <sequence resource="EMBL-CDS" id="EAZ31384"/>
    </conflict>
</comment>
<proteinExistence type="evidence at transcript level"/>